<feature type="signal peptide">
    <location>
        <begin position="1"/>
        <end position="29"/>
    </location>
</feature>
<feature type="peptide" id="PRO_0000025372" description="Pancreatic polypeptide">
    <location>
        <begin position="30"/>
        <end position="65"/>
    </location>
</feature>
<feature type="peptide" id="PRO_0000025373" description="C-terminal peptide">
    <location>
        <begin position="69"/>
        <end position="98"/>
    </location>
</feature>
<feature type="modified residue" description="Tyrosine amide" evidence="1">
    <location>
        <position position="65"/>
    </location>
</feature>
<dbReference type="EMBL" id="M13588">
    <property type="protein sequence ID" value="AAA41923.1"/>
    <property type="molecule type" value="mRNA"/>
</dbReference>
<dbReference type="EMBL" id="M18207">
    <property type="protein sequence ID" value="AAA41922.1"/>
    <property type="molecule type" value="Genomic_DNA"/>
</dbReference>
<dbReference type="EMBL" id="M27450">
    <property type="protein sequence ID" value="AAA99236.1"/>
    <property type="molecule type" value="Genomic_DNA"/>
</dbReference>
<dbReference type="PIR" id="A28261">
    <property type="entry name" value="PCRT"/>
</dbReference>
<dbReference type="RefSeq" id="NP_036758.1">
    <property type="nucleotide sequence ID" value="NM_012626.2"/>
</dbReference>
<dbReference type="FunCoup" id="P06303">
    <property type="interactions" value="5"/>
</dbReference>
<dbReference type="STRING" id="10116.ENSRNOP00000028318"/>
<dbReference type="PaxDb" id="10116-ENSRNOP00000028318"/>
<dbReference type="Ensembl" id="ENSRNOT00000028318.8">
    <property type="protein sequence ID" value="ENSRNOP00000028318.4"/>
    <property type="gene ID" value="ENSRNOG00000020874.8"/>
</dbReference>
<dbReference type="GeneID" id="24677"/>
<dbReference type="KEGG" id="rno:24677"/>
<dbReference type="UCSC" id="RGD:3385">
    <property type="organism name" value="rat"/>
</dbReference>
<dbReference type="AGR" id="RGD:3385"/>
<dbReference type="CTD" id="5539"/>
<dbReference type="RGD" id="3385">
    <property type="gene designation" value="Ppy"/>
</dbReference>
<dbReference type="eggNOG" id="ENOG502TD4B">
    <property type="taxonomic scope" value="Eukaryota"/>
</dbReference>
<dbReference type="GeneTree" id="ENSGT00530000064295"/>
<dbReference type="HOGENOM" id="CLU_165150_1_0_1"/>
<dbReference type="InParanoid" id="P06303"/>
<dbReference type="OMA" id="MAATRRC"/>
<dbReference type="OrthoDB" id="9901897at2759"/>
<dbReference type="PhylomeDB" id="P06303"/>
<dbReference type="TreeFam" id="TF332778"/>
<dbReference type="Reactome" id="R-RNO-375276">
    <property type="pathway name" value="Peptide ligand-binding receptors"/>
</dbReference>
<dbReference type="Reactome" id="R-RNO-418594">
    <property type="pathway name" value="G alpha (i) signalling events"/>
</dbReference>
<dbReference type="PRO" id="PR:P06303"/>
<dbReference type="Proteomes" id="UP000002494">
    <property type="component" value="Chromosome 10"/>
</dbReference>
<dbReference type="Bgee" id="ENSRNOG00000020874">
    <property type="expression patterns" value="Expressed in pancreas and 6 other cell types or tissues"/>
</dbReference>
<dbReference type="GO" id="GO:0005737">
    <property type="term" value="C:cytoplasm"/>
    <property type="evidence" value="ECO:0000266"/>
    <property type="project" value="RGD"/>
</dbReference>
<dbReference type="GO" id="GO:0005615">
    <property type="term" value="C:extracellular space"/>
    <property type="evidence" value="ECO:0000266"/>
    <property type="project" value="RGD"/>
</dbReference>
<dbReference type="GO" id="GO:0001664">
    <property type="term" value="F:G protein-coupled receptor binding"/>
    <property type="evidence" value="ECO:0000266"/>
    <property type="project" value="RGD"/>
</dbReference>
<dbReference type="GO" id="GO:0005184">
    <property type="term" value="F:neuropeptide hormone activity"/>
    <property type="evidence" value="ECO:0000318"/>
    <property type="project" value="GO_Central"/>
</dbReference>
<dbReference type="GO" id="GO:0031841">
    <property type="term" value="F:neuropeptide Y receptor binding"/>
    <property type="evidence" value="ECO:0000318"/>
    <property type="project" value="GO_Central"/>
</dbReference>
<dbReference type="GO" id="GO:0007631">
    <property type="term" value="P:feeding behavior"/>
    <property type="evidence" value="ECO:0000318"/>
    <property type="project" value="GO_Central"/>
</dbReference>
<dbReference type="GO" id="GO:0007218">
    <property type="term" value="P:neuropeptide signaling pathway"/>
    <property type="evidence" value="ECO:0000318"/>
    <property type="project" value="GO_Central"/>
</dbReference>
<dbReference type="CDD" id="cd00126">
    <property type="entry name" value="PAH"/>
    <property type="match status" value="1"/>
</dbReference>
<dbReference type="Gene3D" id="6.10.250.900">
    <property type="match status" value="1"/>
</dbReference>
<dbReference type="InterPro" id="IPR001955">
    <property type="entry name" value="Pancreatic_hormone-like"/>
</dbReference>
<dbReference type="InterPro" id="IPR020392">
    <property type="entry name" value="Pancreatic_hormone-like_CS"/>
</dbReference>
<dbReference type="PANTHER" id="PTHR10533">
    <property type="entry name" value="NEUROPEPTIDE Y/PANCREATIC HORMONE/PEPTIDE YY"/>
    <property type="match status" value="1"/>
</dbReference>
<dbReference type="PANTHER" id="PTHR10533:SF2">
    <property type="entry name" value="PANCREATIC POLYPEPTIDE PROHORMONE"/>
    <property type="match status" value="1"/>
</dbReference>
<dbReference type="Pfam" id="PF00159">
    <property type="entry name" value="Hormone_3"/>
    <property type="match status" value="1"/>
</dbReference>
<dbReference type="PRINTS" id="PR00278">
    <property type="entry name" value="PANCHORMONE"/>
</dbReference>
<dbReference type="SMART" id="SM00309">
    <property type="entry name" value="PAH"/>
    <property type="match status" value="1"/>
</dbReference>
<dbReference type="PROSITE" id="PS00265">
    <property type="entry name" value="PANCREATIC_HORMONE_1"/>
    <property type="match status" value="1"/>
</dbReference>
<dbReference type="PROSITE" id="PS50276">
    <property type="entry name" value="PANCREATIC_HORMONE_2"/>
    <property type="match status" value="1"/>
</dbReference>
<comment type="function">
    <molecule>Pancreatic polypeptide</molecule>
    <text evidence="2">Hormone secreted by pancreatic cells that acts as a regulator of pancreatic and gastrointestinal functions probably by signaling through the G protein-coupled receptor NPY4R2.</text>
</comment>
<comment type="subcellular location">
    <subcellularLocation>
        <location evidence="2">Secreted</location>
    </subcellularLocation>
</comment>
<comment type="PTM">
    <text>No icosapeptide-like peptide is cleaved from the C-terminal.</text>
</comment>
<comment type="similarity">
    <text evidence="4">Belongs to the NPY family.</text>
</comment>
<sequence>MAVAYYCLSLFLLSTWVALLLQPLQGAWGAPLEPMYPGDYATHEQRAQYETQLRRYINTLTRPRYGKRDEDTAGLPGRQLPPCTSLLVGLMPCAAARS</sequence>
<protein>
    <recommendedName>
        <fullName evidence="4">Pancreatic polypeptide prohormone</fullName>
    </recommendedName>
    <component>
        <recommendedName>
            <fullName evidence="3">Pancreatic polypeptide</fullName>
            <shortName evidence="3">PP</shortName>
        </recommendedName>
    </component>
    <component>
        <recommendedName>
            <fullName evidence="3">C-terminal peptide</fullName>
        </recommendedName>
    </component>
</protein>
<gene>
    <name type="primary">Ppy</name>
</gene>
<accession>P06303</accession>
<proteinExistence type="inferred from homology"/>
<name>PAHO_RAT</name>
<evidence type="ECO:0000250" key="1"/>
<evidence type="ECO:0000250" key="2">
    <source>
        <dbReference type="UniProtKB" id="P01298"/>
    </source>
</evidence>
<evidence type="ECO:0000303" key="3">
    <source>
    </source>
</evidence>
<evidence type="ECO:0000305" key="4"/>
<reference key="1">
    <citation type="journal article" date="1986" name="J. Biol. Chem.">
        <title>Mosaic evolution of prepropancreatic polypeptide.</title>
        <authorList>
            <person name="Yamamoto H."/>
            <person name="Nata K."/>
            <person name="Okamoto H."/>
        </authorList>
    </citation>
    <scope>NUCLEOTIDE SEQUENCE [MRNA]</scope>
</reference>
<reference key="2">
    <citation type="journal article" date="1988" name="J. Biol. Chem.">
        <title>Mosaic evolution of prepropancreatic polypeptide. II. Structural conservation and divergence in pancreatic polypeptide gene.</title>
        <authorList>
            <person name="Yonekura H."/>
            <person name="Nata K."/>
            <person name="Watanabe T."/>
            <person name="Kurashina Y."/>
            <person name="Yamamoto H."/>
            <person name="Okamoto H."/>
        </authorList>
    </citation>
    <scope>NUCLEOTIDE SEQUENCE [GENOMIC DNA]</scope>
</reference>
<reference key="3">
    <citation type="journal article" date="1988" name="Arch. Biochem. Biophys.">
        <title>Different splice site utilization generates diversity between the rat and human pancreatic polypeptide precursors.</title>
        <authorList>
            <person name="Kopin A.S."/>
            <person name="Toder A.E."/>
            <person name="Leiter A.B."/>
        </authorList>
    </citation>
    <scope>NUCLEOTIDE SEQUENCE [GENOMIC DNA]</scope>
</reference>
<keyword id="KW-0027">Amidation</keyword>
<keyword id="KW-0165">Cleavage on pair of basic residues</keyword>
<keyword id="KW-0372">Hormone</keyword>
<keyword id="KW-1185">Reference proteome</keyword>
<keyword id="KW-0964">Secreted</keyword>
<keyword id="KW-0732">Signal</keyword>
<organism>
    <name type="scientific">Rattus norvegicus</name>
    <name type="common">Rat</name>
    <dbReference type="NCBI Taxonomy" id="10116"/>
    <lineage>
        <taxon>Eukaryota</taxon>
        <taxon>Metazoa</taxon>
        <taxon>Chordata</taxon>
        <taxon>Craniata</taxon>
        <taxon>Vertebrata</taxon>
        <taxon>Euteleostomi</taxon>
        <taxon>Mammalia</taxon>
        <taxon>Eutheria</taxon>
        <taxon>Euarchontoglires</taxon>
        <taxon>Glires</taxon>
        <taxon>Rodentia</taxon>
        <taxon>Myomorpha</taxon>
        <taxon>Muroidea</taxon>
        <taxon>Muridae</taxon>
        <taxon>Murinae</taxon>
        <taxon>Rattus</taxon>
    </lineage>
</organism>